<dbReference type="EC" id="3.1.3.16" evidence="2"/>
<dbReference type="EMBL" id="D00859">
    <property type="protein sequence ID" value="BAA00732.1"/>
    <property type="molecule type" value="mRNA"/>
</dbReference>
<dbReference type="EMBL" id="D90163">
    <property type="protein sequence ID" value="BAA14194.1"/>
    <property type="molecule type" value="mRNA"/>
</dbReference>
<dbReference type="EMBL" id="BC070517">
    <property type="protein sequence ID" value="AAH70517.1"/>
    <property type="molecule type" value="mRNA"/>
</dbReference>
<dbReference type="PIR" id="JX0157">
    <property type="entry name" value="JX0157"/>
</dbReference>
<dbReference type="RefSeq" id="NP_113715.1">
    <property type="nucleotide sequence ID" value="NM_031527.1"/>
</dbReference>
<dbReference type="SMR" id="P62138"/>
<dbReference type="BioGRID" id="246800">
    <property type="interactions" value="8"/>
</dbReference>
<dbReference type="CORUM" id="P62138"/>
<dbReference type="ELM" id="P62138"/>
<dbReference type="FunCoup" id="P62138">
    <property type="interactions" value="3678"/>
</dbReference>
<dbReference type="IntAct" id="P62138">
    <property type="interactions" value="5"/>
</dbReference>
<dbReference type="MINT" id="P62138"/>
<dbReference type="STRING" id="10116.ENSRNOP00000025282"/>
<dbReference type="GlyGen" id="P62138">
    <property type="glycosylation" value="1 site"/>
</dbReference>
<dbReference type="iPTMnet" id="P62138"/>
<dbReference type="PhosphoSitePlus" id="P62138"/>
<dbReference type="SwissPalm" id="P62138"/>
<dbReference type="jPOST" id="P62138"/>
<dbReference type="PaxDb" id="10116-ENSRNOP00000025282"/>
<dbReference type="Ensembl" id="ENSRNOT00000025282.7">
    <property type="protein sequence ID" value="ENSRNOP00000025282.4"/>
    <property type="gene ID" value="ENSRNOG00000018708.7"/>
</dbReference>
<dbReference type="Ensembl" id="ENSRNOT00000098712.1">
    <property type="protein sequence ID" value="ENSRNOP00000087498.1"/>
    <property type="gene ID" value="ENSRNOG00000018708.7"/>
</dbReference>
<dbReference type="GeneID" id="24668"/>
<dbReference type="KEGG" id="rno:24668"/>
<dbReference type="UCSC" id="RGD:3375">
    <property type="organism name" value="rat"/>
</dbReference>
<dbReference type="AGR" id="RGD:3375"/>
<dbReference type="CTD" id="5499"/>
<dbReference type="RGD" id="3375">
    <property type="gene designation" value="Ppp1ca"/>
</dbReference>
<dbReference type="eggNOG" id="KOG0374">
    <property type="taxonomic scope" value="Eukaryota"/>
</dbReference>
<dbReference type="GeneTree" id="ENSGT00940000153472"/>
<dbReference type="HOGENOM" id="CLU_004962_8_1_1"/>
<dbReference type="InParanoid" id="P62138"/>
<dbReference type="OMA" id="SIFICRG"/>
<dbReference type="OrthoDB" id="1930084at2759"/>
<dbReference type="PhylomeDB" id="P62138"/>
<dbReference type="TreeFam" id="TF354243"/>
<dbReference type="Reactome" id="R-RNO-180024">
    <property type="pathway name" value="DARPP-32 events"/>
</dbReference>
<dbReference type="PRO" id="PR:P62138"/>
<dbReference type="Proteomes" id="UP000002494">
    <property type="component" value="Chromosome 1"/>
</dbReference>
<dbReference type="Bgee" id="ENSRNOG00000018708">
    <property type="expression patterns" value="Expressed in thymus and 19 other cell types or tissues"/>
</dbReference>
<dbReference type="ExpressionAtlas" id="P62138">
    <property type="expression patterns" value="baseline and differential"/>
</dbReference>
<dbReference type="GO" id="GO:0005912">
    <property type="term" value="C:adherens junction"/>
    <property type="evidence" value="ECO:0000266"/>
    <property type="project" value="RGD"/>
</dbReference>
<dbReference type="GO" id="GO:0000781">
    <property type="term" value="C:chromosome, telomeric region"/>
    <property type="evidence" value="ECO:0000266"/>
    <property type="project" value="RGD"/>
</dbReference>
<dbReference type="GO" id="GO:0005737">
    <property type="term" value="C:cytoplasm"/>
    <property type="evidence" value="ECO:0000266"/>
    <property type="project" value="RGD"/>
</dbReference>
<dbReference type="GO" id="GO:0005829">
    <property type="term" value="C:cytosol"/>
    <property type="evidence" value="ECO:0000304"/>
    <property type="project" value="Reactome"/>
</dbReference>
<dbReference type="GO" id="GO:0043197">
    <property type="term" value="C:dendritic spine"/>
    <property type="evidence" value="ECO:0000314"/>
    <property type="project" value="RGD"/>
</dbReference>
<dbReference type="GO" id="GO:0098978">
    <property type="term" value="C:glutamatergic synapse"/>
    <property type="evidence" value="ECO:0000314"/>
    <property type="project" value="SynGO"/>
</dbReference>
<dbReference type="GO" id="GO:0042587">
    <property type="term" value="C:glycogen granule"/>
    <property type="evidence" value="ECO:0000314"/>
    <property type="project" value="RGD"/>
</dbReference>
<dbReference type="GO" id="GO:0043025">
    <property type="term" value="C:neuronal cell body"/>
    <property type="evidence" value="ECO:0000314"/>
    <property type="project" value="RGD"/>
</dbReference>
<dbReference type="GO" id="GO:0005730">
    <property type="term" value="C:nucleolus"/>
    <property type="evidence" value="ECO:0007669"/>
    <property type="project" value="UniProtKB-SubCell"/>
</dbReference>
<dbReference type="GO" id="GO:0005654">
    <property type="term" value="C:nucleoplasm"/>
    <property type="evidence" value="ECO:0000266"/>
    <property type="project" value="RGD"/>
</dbReference>
<dbReference type="GO" id="GO:0005634">
    <property type="term" value="C:nucleus"/>
    <property type="evidence" value="ECO:0000266"/>
    <property type="project" value="RGD"/>
</dbReference>
<dbReference type="GO" id="GO:0043204">
    <property type="term" value="C:perikaryon"/>
    <property type="evidence" value="ECO:0000314"/>
    <property type="project" value="RGD"/>
</dbReference>
<dbReference type="GO" id="GO:0005886">
    <property type="term" value="C:plasma membrane"/>
    <property type="evidence" value="ECO:0007669"/>
    <property type="project" value="Ensembl"/>
</dbReference>
<dbReference type="GO" id="GO:0098794">
    <property type="term" value="C:postsynapse"/>
    <property type="evidence" value="ECO:0000314"/>
    <property type="project" value="SynGO"/>
</dbReference>
<dbReference type="GO" id="GO:0098793">
    <property type="term" value="C:presynapse"/>
    <property type="evidence" value="ECO:0000314"/>
    <property type="project" value="SynGO"/>
</dbReference>
<dbReference type="GO" id="GO:0000164">
    <property type="term" value="C:protein phosphatase type 1 complex"/>
    <property type="evidence" value="ECO:0000314"/>
    <property type="project" value="RGD"/>
</dbReference>
<dbReference type="GO" id="GO:0072357">
    <property type="term" value="C:PTW/PP1 phosphatase complex"/>
    <property type="evidence" value="ECO:0000250"/>
    <property type="project" value="UniProtKB"/>
</dbReference>
<dbReference type="GO" id="GO:0098641">
    <property type="term" value="F:cadherin binding involved in cell-cell adhesion"/>
    <property type="evidence" value="ECO:0000266"/>
    <property type="project" value="RGD"/>
</dbReference>
<dbReference type="GO" id="GO:0005506">
    <property type="term" value="F:iron ion binding"/>
    <property type="evidence" value="ECO:0000250"/>
    <property type="project" value="UniProtKB"/>
</dbReference>
<dbReference type="GO" id="GO:0016791">
    <property type="term" value="F:phosphatase activity"/>
    <property type="evidence" value="ECO:0000250"/>
    <property type="project" value="UniProtKB"/>
</dbReference>
<dbReference type="GO" id="GO:0004721">
    <property type="term" value="F:phosphoprotein phosphatase activity"/>
    <property type="evidence" value="ECO:0000314"/>
    <property type="project" value="RGD"/>
</dbReference>
<dbReference type="GO" id="GO:0008157">
    <property type="term" value="F:protein phosphatase 1 binding"/>
    <property type="evidence" value="ECO:0000353"/>
    <property type="project" value="RGD"/>
</dbReference>
<dbReference type="GO" id="GO:0004722">
    <property type="term" value="F:protein serine/threonine phosphatase activity"/>
    <property type="evidence" value="ECO:0000250"/>
    <property type="project" value="UniProtKB"/>
</dbReference>
<dbReference type="GO" id="GO:0044877">
    <property type="term" value="F:protein-containing complex binding"/>
    <property type="evidence" value="ECO:0000353"/>
    <property type="project" value="RGD"/>
</dbReference>
<dbReference type="GO" id="GO:0043021">
    <property type="term" value="F:ribonucleoprotein complex binding"/>
    <property type="evidence" value="ECO:0000353"/>
    <property type="project" value="RGD"/>
</dbReference>
<dbReference type="GO" id="GO:0180007">
    <property type="term" value="F:RNA polymerase II CTD heptapeptide repeat S5 phosphatase activity"/>
    <property type="evidence" value="ECO:0000250"/>
    <property type="project" value="UniProtKB"/>
</dbReference>
<dbReference type="GO" id="GO:0046914">
    <property type="term" value="F:transition metal ion binding"/>
    <property type="evidence" value="ECO:0000250"/>
    <property type="project" value="UniProtKB"/>
</dbReference>
<dbReference type="GO" id="GO:0048754">
    <property type="term" value="P:branching morphogenesis of an epithelial tube"/>
    <property type="evidence" value="ECO:0000266"/>
    <property type="project" value="RGD"/>
</dbReference>
<dbReference type="GO" id="GO:0051301">
    <property type="term" value="P:cell division"/>
    <property type="evidence" value="ECO:0007669"/>
    <property type="project" value="UniProtKB-KW"/>
</dbReference>
<dbReference type="GO" id="GO:0032922">
    <property type="term" value="P:circadian regulation of gene expression"/>
    <property type="evidence" value="ECO:0000250"/>
    <property type="project" value="UniProtKB"/>
</dbReference>
<dbReference type="GO" id="GO:0043153">
    <property type="term" value="P:entrainment of circadian clock by photoperiod"/>
    <property type="evidence" value="ECO:0000250"/>
    <property type="project" value="UniProtKB"/>
</dbReference>
<dbReference type="GO" id="GO:0005977">
    <property type="term" value="P:glycogen metabolic process"/>
    <property type="evidence" value="ECO:0007669"/>
    <property type="project" value="UniProtKB-KW"/>
</dbReference>
<dbReference type="GO" id="GO:0030324">
    <property type="term" value="P:lung development"/>
    <property type="evidence" value="ECO:0000266"/>
    <property type="project" value="RGD"/>
</dbReference>
<dbReference type="GO" id="GO:0034244">
    <property type="term" value="P:negative regulation of transcription elongation by RNA polymerase II"/>
    <property type="evidence" value="ECO:0000250"/>
    <property type="project" value="UniProtKB"/>
</dbReference>
<dbReference type="GO" id="GO:2001241">
    <property type="term" value="P:positive regulation of extrinsic apoptotic signaling pathway in absence of ligand"/>
    <property type="evidence" value="ECO:0000266"/>
    <property type="project" value="RGD"/>
</dbReference>
<dbReference type="GO" id="GO:0045725">
    <property type="term" value="P:positive regulation of glycogen biosynthetic process"/>
    <property type="evidence" value="ECO:0000266"/>
    <property type="project" value="RGD"/>
</dbReference>
<dbReference type="GO" id="GO:2000806">
    <property type="term" value="P:positive regulation of termination of RNA polymerase II transcription, poly(A)-coupled"/>
    <property type="evidence" value="ECO:0007669"/>
    <property type="project" value="Ensembl"/>
</dbReference>
<dbReference type="GO" id="GO:0032968">
    <property type="term" value="P:positive regulation of transcription elongation by RNA polymerase II"/>
    <property type="evidence" value="ECO:0000250"/>
    <property type="project" value="UniProtKB"/>
</dbReference>
<dbReference type="GO" id="GO:0050821">
    <property type="term" value="P:protein stabilization"/>
    <property type="evidence" value="ECO:0007669"/>
    <property type="project" value="Ensembl"/>
</dbReference>
<dbReference type="GO" id="GO:0042752">
    <property type="term" value="P:regulation of circadian rhythm"/>
    <property type="evidence" value="ECO:0000250"/>
    <property type="project" value="UniProtKB"/>
</dbReference>
<dbReference type="GO" id="GO:0005979">
    <property type="term" value="P:regulation of glycogen biosynthetic process"/>
    <property type="evidence" value="ECO:0000314"/>
    <property type="project" value="RGD"/>
</dbReference>
<dbReference type="GO" id="GO:0005981">
    <property type="term" value="P:regulation of glycogen catabolic process"/>
    <property type="evidence" value="ECO:0000314"/>
    <property type="project" value="RGD"/>
</dbReference>
<dbReference type="GO" id="GO:0010288">
    <property type="term" value="P:response to lead ion"/>
    <property type="evidence" value="ECO:0000314"/>
    <property type="project" value="ARUK-UCL"/>
</dbReference>
<dbReference type="GO" id="GO:0001111">
    <property type="term" value="P:RNA polymerase II promoter clearance"/>
    <property type="evidence" value="ECO:0000250"/>
    <property type="project" value="UniProtKB"/>
</dbReference>
<dbReference type="GO" id="GO:0043247">
    <property type="term" value="P:telomere maintenance in response to DNA damage"/>
    <property type="evidence" value="ECO:0000266"/>
    <property type="project" value="RGD"/>
</dbReference>
<dbReference type="CDD" id="cd07414">
    <property type="entry name" value="MPP_PP1_PPKL"/>
    <property type="match status" value="1"/>
</dbReference>
<dbReference type="FunFam" id="3.60.21.10:FF:000004">
    <property type="entry name" value="Serine/threonine-protein phosphatase"/>
    <property type="match status" value="1"/>
</dbReference>
<dbReference type="Gene3D" id="3.60.21.10">
    <property type="match status" value="1"/>
</dbReference>
<dbReference type="InterPro" id="IPR004843">
    <property type="entry name" value="Calcineurin-like_PHP_ApaH"/>
</dbReference>
<dbReference type="InterPro" id="IPR029052">
    <property type="entry name" value="Metallo-depent_PP-like"/>
</dbReference>
<dbReference type="InterPro" id="IPR050341">
    <property type="entry name" value="PP1_catalytic_subunit"/>
</dbReference>
<dbReference type="InterPro" id="IPR006186">
    <property type="entry name" value="Ser/Thr-sp_prot-phosphatase"/>
</dbReference>
<dbReference type="InterPro" id="IPR031675">
    <property type="entry name" value="STPPase_N"/>
</dbReference>
<dbReference type="PANTHER" id="PTHR11668">
    <property type="entry name" value="SERINE/THREONINE PROTEIN PHOSPHATASE"/>
    <property type="match status" value="1"/>
</dbReference>
<dbReference type="PANTHER" id="PTHR11668:SF377">
    <property type="entry name" value="SERINE_THREONINE-PROTEIN PHOSPHATASE PP1-ALPHA CATALYTIC SUBUNIT"/>
    <property type="match status" value="1"/>
</dbReference>
<dbReference type="Pfam" id="PF00149">
    <property type="entry name" value="Metallophos"/>
    <property type="match status" value="1"/>
</dbReference>
<dbReference type="Pfam" id="PF16891">
    <property type="entry name" value="STPPase_N"/>
    <property type="match status" value="1"/>
</dbReference>
<dbReference type="PRINTS" id="PR00114">
    <property type="entry name" value="STPHPHTASE"/>
</dbReference>
<dbReference type="SMART" id="SM00156">
    <property type="entry name" value="PP2Ac"/>
    <property type="match status" value="1"/>
</dbReference>
<dbReference type="SUPFAM" id="SSF56300">
    <property type="entry name" value="Metallo-dependent phosphatases"/>
    <property type="match status" value="1"/>
</dbReference>
<dbReference type="PROSITE" id="PS00125">
    <property type="entry name" value="SER_THR_PHOSPHATASE"/>
    <property type="match status" value="1"/>
</dbReference>
<reference key="1">
    <citation type="journal article" date="1991" name="J. Biochem.">
        <title>Molecular cloning and sequence analysis of cDNA for the catalytic subunit 1 alpha of rat kidney type 1 protein phosphatase, and detection of the gene expression at high levels in hepatoma cells and regenerating livers as compared to rat livers.</title>
        <authorList>
            <person name="Kitamura K."/>
            <person name="Mizuno Y."/>
            <person name="Sasaki A."/>
            <person name="Yasui A."/>
            <person name="Tsuiki S."/>
            <person name="Kikuchi K."/>
        </authorList>
    </citation>
    <scope>NUCLEOTIDE SEQUENCE [MRNA]</scope>
    <source>
        <tissue>Kidney</tissue>
    </source>
</reference>
<reference key="2">
    <citation type="journal article" date="1990" name="Jpn. J. Cancer Res.">
        <title>Identification of members of the protein phosphatase 1 gene family in the rat and enhanced expression of protein phosphatase 1 alpha gene in rat hepatocellular carcinomas.</title>
        <authorList>
            <person name="Sasaki K."/>
            <person name="Shima H."/>
            <person name="Kitagawa Y."/>
            <person name="Irino S."/>
            <person name="Sugimura T."/>
            <person name="Nagao M."/>
        </authorList>
    </citation>
    <scope>NUCLEOTIDE SEQUENCE [MRNA]</scope>
</reference>
<reference key="3">
    <citation type="journal article" date="1995" name="J. Neurosci.">
        <title>Differential expression of protein phosphatase 1 isoforms in mammalian brain.</title>
        <authorList>
            <person name="da Cruz e Silva E.F."/>
            <person name="Fox C.A."/>
            <person name="Ouimet C.C."/>
            <person name="Gustafson E."/>
            <person name="Watson S.J."/>
            <person name="Greengard P."/>
        </authorList>
    </citation>
    <scope>NUCLEOTIDE SEQUENCE [MRNA]</scope>
    <scope>TISSUE SPECIFICITY</scope>
    <source>
        <tissue>Brain</tissue>
    </source>
</reference>
<reference key="4">
    <citation type="journal article" date="2004" name="Genome Res.">
        <title>The status, quality, and expansion of the NIH full-length cDNA project: the Mammalian Gene Collection (MGC).</title>
        <authorList>
            <consortium name="The MGC Project Team"/>
        </authorList>
    </citation>
    <scope>NUCLEOTIDE SEQUENCE [LARGE SCALE MRNA]</scope>
    <source>
        <tissue>Heart</tissue>
    </source>
</reference>
<reference key="5">
    <citation type="journal article" date="1999" name="Biochemistry">
        <title>Regulation of neurabin I interaction with protein phosphatase 1 by phosphorylation.</title>
        <authorList>
            <person name="McAvoy T."/>
            <person name="Allen P.B."/>
            <person name="Obaishi H."/>
            <person name="Nakanishi H."/>
            <person name="Takai Y."/>
            <person name="Greengard P."/>
            <person name="Nairn A.C."/>
            <person name="Hemmings H.C. Jr."/>
        </authorList>
    </citation>
    <scope>PROTEIN SEQUENCE OF 7-26 AND 212-234</scope>
    <scope>INTERACTION WITH PPP1R9A AND PPP1R9B</scope>
    <source>
        <strain>Sprague-Dawley</strain>
    </source>
</reference>
<reference key="6">
    <citation type="submission" date="2006-11" db="UniProtKB">
        <authorList>
            <person name="Lubec G."/>
            <person name="Afjehi-Sadat L."/>
        </authorList>
    </citation>
    <scope>PROTEIN SEQUENCE OF 44-60 AND 112-122</scope>
    <scope>IDENTIFICATION BY MASS SPECTROMETRY</scope>
    <source>
        <strain>Sprague-Dawley</strain>
        <tissue>Spinal cord</tissue>
    </source>
</reference>
<reference key="7">
    <citation type="journal article" date="2007" name="Biochim. Biophys. Acta">
        <title>The nuclear PP1 interacting protein ZAP3 (ZAP) is a putative nucleoside kinase that complexes with SAM68, CIA, NF110/45, and HNRNP-G.</title>
        <authorList>
            <person name="Ulke-Lemee A."/>
            <person name="Trinkle-Mulcahy L."/>
            <person name="Chaulk S."/>
            <person name="Bernstein N.K."/>
            <person name="Morrice N."/>
            <person name="Glover M."/>
            <person name="Lamond A.I."/>
            <person name="Moorhead G.B.G."/>
        </authorList>
    </citation>
    <scope>INTERACTION WITH YLPM1</scope>
</reference>
<accession>P62138</accession>
<accession>P08129</accession>
<accession>P20653</accession>
<accession>P22802</accession>
<protein>
    <recommendedName>
        <fullName>Serine/threonine-protein phosphatase PP1-alpha catalytic subunit</fullName>
        <shortName>PP-1A</shortName>
        <ecNumber evidence="2">3.1.3.16</ecNumber>
    </recommendedName>
</protein>
<feature type="initiator methionine" description="Removed" evidence="2">
    <location>
        <position position="1"/>
    </location>
</feature>
<feature type="chain" id="PRO_0000058777" description="Serine/threonine-protein phosphatase PP1-alpha catalytic subunit">
    <location>
        <begin position="2"/>
        <end position="330"/>
    </location>
</feature>
<feature type="region of interest" description="Disordered" evidence="5">
    <location>
        <begin position="306"/>
        <end position="330"/>
    </location>
</feature>
<feature type="active site" description="Proton donor" evidence="1">
    <location>
        <position position="125"/>
    </location>
</feature>
<feature type="binding site" evidence="2">
    <location>
        <position position="64"/>
    </location>
    <ligand>
        <name>Mn(2+)</name>
        <dbReference type="ChEBI" id="CHEBI:29035"/>
        <label>1</label>
    </ligand>
</feature>
<feature type="binding site" evidence="2">
    <location>
        <position position="64"/>
    </location>
    <ligand>
        <name>Mn(2+)</name>
        <dbReference type="ChEBI" id="CHEBI:29035"/>
        <label>2</label>
    </ligand>
</feature>
<feature type="binding site" evidence="2">
    <location>
        <position position="66"/>
    </location>
    <ligand>
        <name>Mn(2+)</name>
        <dbReference type="ChEBI" id="CHEBI:29035"/>
        <label>1</label>
    </ligand>
</feature>
<feature type="binding site" evidence="2">
    <location>
        <position position="92"/>
    </location>
    <ligand>
        <name>Mn(2+)</name>
        <dbReference type="ChEBI" id="CHEBI:29035"/>
        <label>1</label>
    </ligand>
</feature>
<feature type="binding site" evidence="2">
    <location>
        <position position="92"/>
    </location>
    <ligand>
        <name>Mn(2+)</name>
        <dbReference type="ChEBI" id="CHEBI:29035"/>
        <label>2</label>
    </ligand>
</feature>
<feature type="binding site" evidence="2">
    <location>
        <position position="124"/>
    </location>
    <ligand>
        <name>Mn(2+)</name>
        <dbReference type="ChEBI" id="CHEBI:29035"/>
        <label>2</label>
    </ligand>
</feature>
<feature type="binding site" evidence="2">
    <location>
        <position position="173"/>
    </location>
    <ligand>
        <name>Mn(2+)</name>
        <dbReference type="ChEBI" id="CHEBI:29035"/>
        <label>2</label>
    </ligand>
</feature>
<feature type="binding site" evidence="2">
    <location>
        <position position="248"/>
    </location>
    <ligand>
        <name>Mn(2+)</name>
        <dbReference type="ChEBI" id="CHEBI:29035"/>
        <label>2</label>
    </ligand>
</feature>
<feature type="modified residue" description="N-acetylserine" evidence="2">
    <location>
        <position position="2"/>
    </location>
</feature>
<feature type="modified residue" description="Phosphoserine" evidence="2">
    <location>
        <position position="2"/>
    </location>
</feature>
<feature type="modified residue" description="Phosphoserine" evidence="2">
    <location>
        <position position="22"/>
    </location>
</feature>
<feature type="modified residue" description="N6-acetyllysine" evidence="3">
    <location>
        <position position="305"/>
    </location>
</feature>
<feature type="modified residue" description="Phosphotyrosine" evidence="3">
    <location>
        <position position="306"/>
    </location>
</feature>
<feature type="modified residue" description="Phosphothreonine" evidence="2">
    <location>
        <position position="320"/>
    </location>
</feature>
<feature type="modified residue" description="Phosphoserine" evidence="2">
    <location>
        <position position="325"/>
    </location>
</feature>
<proteinExistence type="evidence at protein level"/>
<sequence>MSDSEKLNLDSIIGRLLEVQGSRPGKNVQLTENEIRGLCLKSREIFLSQPILLELEAPLKICGDIHGQYYDLLRLFEYGGFPPESNYLFLGDYVDRGKQSLETICLLLAYKIKYPENFFLLRGNHECASINRIYGFYDECKRRYNIKLWKTFTDCFNCLPIAAIVDEKIFCCHGGLSPDLQSMEQIRRIMRPTDVPDQGLLCDLLWSDPDKDVQGWGENDRGVSFTFGAEVVAKFLHKHDLDLICRAHQVVEDGYEFFAKRQLVTLFSAPNYCGEFDNAGAMMSVDETLMCSFQILKPADKNKGKYGQFSGLNPGGRPITPPRNSAKAKK</sequence>
<keyword id="KW-0007">Acetylation</keyword>
<keyword id="KW-0090">Biological rhythms</keyword>
<keyword id="KW-0119">Carbohydrate metabolism</keyword>
<keyword id="KW-0131">Cell cycle</keyword>
<keyword id="KW-0132">Cell division</keyword>
<keyword id="KW-0963">Cytoplasm</keyword>
<keyword id="KW-0903">Direct protein sequencing</keyword>
<keyword id="KW-0321">Glycogen metabolism</keyword>
<keyword id="KW-0378">Hydrolase</keyword>
<keyword id="KW-0464">Manganese</keyword>
<keyword id="KW-0479">Metal-binding</keyword>
<keyword id="KW-0539">Nucleus</keyword>
<keyword id="KW-0597">Phosphoprotein</keyword>
<keyword id="KW-0904">Protein phosphatase</keyword>
<keyword id="KW-1185">Reference proteome</keyword>
<organism>
    <name type="scientific">Rattus norvegicus</name>
    <name type="common">Rat</name>
    <dbReference type="NCBI Taxonomy" id="10116"/>
    <lineage>
        <taxon>Eukaryota</taxon>
        <taxon>Metazoa</taxon>
        <taxon>Chordata</taxon>
        <taxon>Craniata</taxon>
        <taxon>Vertebrata</taxon>
        <taxon>Euteleostomi</taxon>
        <taxon>Mammalia</taxon>
        <taxon>Eutheria</taxon>
        <taxon>Euarchontoglires</taxon>
        <taxon>Glires</taxon>
        <taxon>Rodentia</taxon>
        <taxon>Myomorpha</taxon>
        <taxon>Muroidea</taxon>
        <taxon>Muridae</taxon>
        <taxon>Murinae</taxon>
        <taxon>Rattus</taxon>
    </lineage>
</organism>
<comment type="function">
    <text evidence="2 3">Protein phosphatase that associates with over 200 regulatory proteins to form highly specific holoenzymes which dephosphorylate hundreds of biological targets. Protein phosphatase 1 (PP1) is essential for cell division, transcription elongation, and participates in the regulation of glycogen metabolism, muscle contractility and protein synthesis. Involved in regulation of ionic conductances and long-term synaptic plasticity. May play an important role in dephosphorylating substrates such as the postsynaptic density-associated Ca(2+)/calmodulin dependent protein kinase II. Catalytic component of the PNUTS-PP1 protein phosphatase complex, a protein phosphatase 1 (PP1) complex that promotes RNA polymerase II transcription pause-release, allowing transcription elongation: the PNUTS-PP1 complex mediates the release of RNA polymerase II from promoter-proximal region of genes by catalyzing dephosphorylation of proteins involved in transcription, such as AFF4, CDK9, MEPCE, INTS12, NCBP1, POLR2M/GDOWN1 and SUPT6H. The PNUTS-PP1 complex also regulates transcription termination by mediating dephosphorylation of SUPT5H in termination zones downstream of poly(A) sites, thereby promoting deceleration of RNA polymerase II transcription. PNUTS-PP1 complex is also involved in the response to replication stress by mediating dephosphorylation of POLR2A at 'Ser-5' of the CTD, promoting RNA polymerase II degradation. PNUTS-PP1 also plays a role in the control of chromatin structure and cell cycle progression during the transition from mitosis into interphase. Regulates NEK2 function in terms of kinase activity and centrosome number and splitting, both in the presence and absence of radiation-induced DNA damage (By similarity). Regulator of neural tube and optic fissure closure, and enteric neural crest cell (ENCCs) migration during development (By similarity). In balance with CSNK1D and CSNK1E, determines the circadian period length, through the regulation of the speed and rhythmicity of PER1 and PER2 phosphorylation. May dephosphorylate CSNK1D and CSNK1E. Dephosphorylates the 'Ser-418' residue of FOXP3 in regulatory T-cells (Treg) from patients with rheumatoid arthritis, thereby inactivating FOXP3 and rendering Treg cells functionally defective. Dephosphorylates CENPA. Dephosphorylates the 'Ser-139' residue of ATG16L1 causing dissociation of ATG12-ATG5-ATG16L1 complex, thereby inhibiting autophagy. Together with PPP1CC (PP1-gamma subunit), dephosphorylates IFIH1/MDA5 and RIG-I leading to their activation and a functional innate immune response. Core component of the SHOC2-MRAS-PP1c (SMP) holophosphatase complex that regulates the MAPK pathway activation. The SMP complex specifically dephosphorylates the inhibitory phosphorylation at 'Ser-259' of RAF1 kinase, 'Ser-365' of BRAF kinase and 'Ser-214' of ARAF kinase, stimulating their kinase activities. The SMP complex enhances the dephosphorylation activity and substrate specificity of PP1c (By similarity).</text>
</comment>
<comment type="catalytic activity">
    <reaction evidence="2">
        <text>O-phospho-L-seryl-[protein] + H2O = L-seryl-[protein] + phosphate</text>
        <dbReference type="Rhea" id="RHEA:20629"/>
        <dbReference type="Rhea" id="RHEA-COMP:9863"/>
        <dbReference type="Rhea" id="RHEA-COMP:11604"/>
        <dbReference type="ChEBI" id="CHEBI:15377"/>
        <dbReference type="ChEBI" id="CHEBI:29999"/>
        <dbReference type="ChEBI" id="CHEBI:43474"/>
        <dbReference type="ChEBI" id="CHEBI:83421"/>
        <dbReference type="EC" id="3.1.3.16"/>
    </reaction>
</comment>
<comment type="catalytic activity">
    <reaction evidence="2">
        <text>O-phospho-L-threonyl-[protein] + H2O = L-threonyl-[protein] + phosphate</text>
        <dbReference type="Rhea" id="RHEA:47004"/>
        <dbReference type="Rhea" id="RHEA-COMP:11060"/>
        <dbReference type="Rhea" id="RHEA-COMP:11605"/>
        <dbReference type="ChEBI" id="CHEBI:15377"/>
        <dbReference type="ChEBI" id="CHEBI:30013"/>
        <dbReference type="ChEBI" id="CHEBI:43474"/>
        <dbReference type="ChEBI" id="CHEBI:61977"/>
        <dbReference type="EC" id="3.1.3.16"/>
    </reaction>
</comment>
<comment type="cofactor">
    <cofactor evidence="2">
        <name>Mn(2+)</name>
        <dbReference type="ChEBI" id="CHEBI:29035"/>
    </cofactor>
    <text evidence="2">Binds 2 manganese ions per subunit.</text>
</comment>
<comment type="subunit">
    <text evidence="2 3 4 6 7">PP1 comprises a catalytic subunit, PPP1CA, PPP1CB or PPP1CC, which is folded into its native form by inhibitor 2 and glycogen synthetase kinase 3, and then complexed to one or several targeting or regulatory subunits. PPP1R12A, PPP1R12B and PPP1R12C mediate binding to myosin. PPP1R3A (in skeletal muscle), PPP1R3B (in liver), PPP1R3C, PPP1R3D and PPP1R3F (in brain) mediate binding to glycogen. Interacts with PPP1R15A and PPP1R15B; the interactions mediate binding to EIF2S1. Part of a complex containing PPP1R15B, PP1 and NCK1/2. Interacts with PPP1R7. Forms a complex with ILF2, ILF3, YLPM1, KHDRBS1, RBMX and NCOA5. Interacts with NOM1 and PPP1R8. Interacts with PPP1R16B. Interacts with RPSA only in the presence of PPP1R16B. Component of the PNUTS-PP1 phosphatase complex, composed of PPP1R10/PNUTS, TOX4, WDR82, and PPP1CA or PPP1CB or PPP1CC. Interacts with PPP1R10/PNUTS and PPP1R8. Interacts with WDR82 in the presence of PPP1R10/PNUTS. Interacts with PPP1R39. Interacts with TRIM28; the interaction dephosphorylates TRIM28 on 'Ser-824' and forms a complex at the p21 promoter site (By similarity). Interacts with PPP1R9A, PPP1R9B and YLPM1. Interacts with NEK2. Interacts with PHACTR4; which acts as an activator of PP1 activity. Interacts with FER; this promotes phosphorylation at Thr-320 (By similarity). Interacts with BTBD10 (By similarity). Interacts with KCTD20 (By similarity). Interacts with FOXP3 (By similarity). Interacts with CENPA (By similarity). Interacts with ATG16L1 (By similarity). Found in a complex with PPP1CA, PPP1CC, SHC1 and PEAK1 (By similarity). Interacts with tensin TNS1 (By similarity). Interacts with SAXO4, PPP1R21, PPP1R26, PPP1R27, PPP1R35, PPP1R36, PPP1R37, SH3RF2, ELFN1 and ELFN2 (By similarity). Interacts with TPRN; the interaction results in inhibition of PPC1A phosphatase activity (By similarity). Interacts with SKA1 (via C-terminus); the interaction is direct and required for the recruitment of PP1 to the kinetochore (By similarity). Interacts with the KNL1 complex subunit KNL1; the interaction is direct and mutually exclusive with KNL1 binding to microtubules (By similarity). Component of the SHOC2-MRAS-PP1c (SMP) complex consisting of SHOC2, GTP-bound M-Ras/MRAS and the catalytic subunit of protein phosphatase 1 (either PPP1CA, PPP1CB or PPP1CC) (By similarity). SHOC2 and PP1c preferably bind M-Ras/MRAS, but they also bind K-Ras/KRAS, N-Ras/NRAS and H-Ras/HRAS; these interactions are GTP-dependent and both SHOC2 and PP1c are required to form a stable complex (By similarity). Interacts with SHOC2 in the absence of Ras GTPases (By similarity).</text>
</comment>
<comment type="interaction">
    <interactant intactId="EBI-357231">
        <id>P62138</id>
    </interactant>
    <interactant intactId="EBI-15644430">
        <id>Q5PQX1</id>
        <label>Tor1aip1</label>
    </interactant>
    <organismsDiffer>false</organismsDiffer>
    <experiments>2</experiments>
</comment>
<comment type="subcellular location">
    <subcellularLocation>
        <location evidence="2">Cytoplasm</location>
    </subcellularLocation>
    <subcellularLocation>
        <location evidence="2">Nucleus</location>
    </subcellularLocation>
    <subcellularLocation>
        <location evidence="2">Nucleus</location>
        <location evidence="2">Nucleoplasm</location>
    </subcellularLocation>
    <subcellularLocation>
        <location evidence="2">Nucleus</location>
        <location evidence="2">Nucleolus</location>
    </subcellularLocation>
    <text evidence="2">Primarily nuclear and largely excluded from the nucleolus. Highly mobile in cells and can be relocalized through interaction with targeting subunits. NOM1 plays a role in targeting it to the nucleolus. In the presence of PPP1R8 relocalizes from the nucleus to nuclear speckles.</text>
</comment>
<comment type="tissue specificity">
    <text evidence="8">Widely expressed.</text>
</comment>
<comment type="PTM">
    <text evidence="2">Phosphorylated. Dephosphorylated at Thr-320 in the presence of ionizing radiation.</text>
</comment>
<comment type="similarity">
    <text evidence="9">Belongs to the PPP phosphatase family. PP-1 subfamily.</text>
</comment>
<comment type="online information" name="Protein Spotlight">
    <link uri="https://www.proteinspotlight.org/back_issues/032"/>
    <text>The things we forget - Issue 32 of March 2003</text>
</comment>
<name>PP1A_RAT</name>
<gene>
    <name type="primary">Ppp1ca</name>
    <name type="synonym">Ppp1a</name>
</gene>
<evidence type="ECO:0000250" key="1">
    <source>
        <dbReference type="UniProtKB" id="P36873"/>
    </source>
</evidence>
<evidence type="ECO:0000250" key="2">
    <source>
        <dbReference type="UniProtKB" id="P62136"/>
    </source>
</evidence>
<evidence type="ECO:0000250" key="3">
    <source>
        <dbReference type="UniProtKB" id="P62137"/>
    </source>
</evidence>
<evidence type="ECO:0000250" key="4">
    <source>
        <dbReference type="UniProtKB" id="P62139"/>
    </source>
</evidence>
<evidence type="ECO:0000256" key="5">
    <source>
        <dbReference type="SAM" id="MobiDB-lite"/>
    </source>
</evidence>
<evidence type="ECO:0000269" key="6">
    <source>
    </source>
</evidence>
<evidence type="ECO:0000269" key="7">
    <source>
    </source>
</evidence>
<evidence type="ECO:0000269" key="8">
    <source>
    </source>
</evidence>
<evidence type="ECO:0000305" key="9"/>